<name>GRPE_RHOPT</name>
<reference key="1">
    <citation type="submission" date="2008-05" db="EMBL/GenBank/DDBJ databases">
        <title>Complete sequence of Rhodopseudomonas palustris TIE-1.</title>
        <authorList>
            <consortium name="US DOE Joint Genome Institute"/>
            <person name="Lucas S."/>
            <person name="Copeland A."/>
            <person name="Lapidus A."/>
            <person name="Glavina del Rio T."/>
            <person name="Dalin E."/>
            <person name="Tice H."/>
            <person name="Pitluck S."/>
            <person name="Chain P."/>
            <person name="Malfatti S."/>
            <person name="Shin M."/>
            <person name="Vergez L."/>
            <person name="Lang D."/>
            <person name="Schmutz J."/>
            <person name="Larimer F."/>
            <person name="Land M."/>
            <person name="Hauser L."/>
            <person name="Kyrpides N."/>
            <person name="Mikhailova N."/>
            <person name="Emerson D."/>
            <person name="Newman D.K."/>
            <person name="Roden E."/>
            <person name="Richardson P."/>
        </authorList>
    </citation>
    <scope>NUCLEOTIDE SEQUENCE [LARGE SCALE GENOMIC DNA]</scope>
    <source>
        <strain>TIE-1</strain>
    </source>
</reference>
<comment type="function">
    <text evidence="1">Participates actively in the response to hyperosmotic and heat shock by preventing the aggregation of stress-denatured proteins, in association with DnaK and GrpE. It is the nucleotide exchange factor for DnaK and may function as a thermosensor. Unfolded proteins bind initially to DnaJ; upon interaction with the DnaJ-bound protein, DnaK hydrolyzes its bound ATP, resulting in the formation of a stable complex. GrpE releases ADP from DnaK; ATP binding to DnaK triggers the release of the substrate protein, thus completing the reaction cycle. Several rounds of ATP-dependent interactions between DnaJ, DnaK and GrpE are required for fully efficient folding.</text>
</comment>
<comment type="subunit">
    <text evidence="1">Homodimer.</text>
</comment>
<comment type="subcellular location">
    <subcellularLocation>
        <location evidence="1">Cytoplasm</location>
    </subcellularLocation>
</comment>
<comment type="similarity">
    <text evidence="1">Belongs to the GrpE family.</text>
</comment>
<protein>
    <recommendedName>
        <fullName evidence="1">Protein GrpE</fullName>
    </recommendedName>
    <alternativeName>
        <fullName evidence="1">HSP-70 cofactor</fullName>
    </alternativeName>
</protein>
<sequence>MTETDGQKDNNQDTAQAAADPVVSKPYIMPDDPEEGSNEALVREAADARDKMLRTLAEMENLRKRTQKEVADARTYGVTSFARDVLDIADNLQRALDAVPAEARANAEPGLKALIEGVELTERSLLNALEKNGVKKFDPKGQKFDPNFQQAMYEVPDPSVPAGTVVQVVQAGFTIGDRVLRPALVGVAKGGAKAAPSDGGSETGNLN</sequence>
<dbReference type="EMBL" id="CP001096">
    <property type="protein sequence ID" value="ACE98894.1"/>
    <property type="molecule type" value="Genomic_DNA"/>
</dbReference>
<dbReference type="RefSeq" id="WP_012494072.1">
    <property type="nucleotide sequence ID" value="NC_011004.1"/>
</dbReference>
<dbReference type="SMR" id="B3Q970"/>
<dbReference type="KEGG" id="rpt:Rpal_0334"/>
<dbReference type="HOGENOM" id="CLU_057217_6_2_5"/>
<dbReference type="OrthoDB" id="9789811at2"/>
<dbReference type="Proteomes" id="UP000001725">
    <property type="component" value="Chromosome"/>
</dbReference>
<dbReference type="GO" id="GO:0005737">
    <property type="term" value="C:cytoplasm"/>
    <property type="evidence" value="ECO:0007669"/>
    <property type="project" value="UniProtKB-SubCell"/>
</dbReference>
<dbReference type="GO" id="GO:0000774">
    <property type="term" value="F:adenyl-nucleotide exchange factor activity"/>
    <property type="evidence" value="ECO:0007669"/>
    <property type="project" value="InterPro"/>
</dbReference>
<dbReference type="GO" id="GO:0042803">
    <property type="term" value="F:protein homodimerization activity"/>
    <property type="evidence" value="ECO:0007669"/>
    <property type="project" value="InterPro"/>
</dbReference>
<dbReference type="GO" id="GO:0051087">
    <property type="term" value="F:protein-folding chaperone binding"/>
    <property type="evidence" value="ECO:0007669"/>
    <property type="project" value="InterPro"/>
</dbReference>
<dbReference type="GO" id="GO:0051082">
    <property type="term" value="F:unfolded protein binding"/>
    <property type="evidence" value="ECO:0007669"/>
    <property type="project" value="TreeGrafter"/>
</dbReference>
<dbReference type="GO" id="GO:0006457">
    <property type="term" value="P:protein folding"/>
    <property type="evidence" value="ECO:0007669"/>
    <property type="project" value="InterPro"/>
</dbReference>
<dbReference type="CDD" id="cd00446">
    <property type="entry name" value="GrpE"/>
    <property type="match status" value="1"/>
</dbReference>
<dbReference type="FunFam" id="2.30.22.10:FF:000002">
    <property type="entry name" value="GrpE protein homolog"/>
    <property type="match status" value="1"/>
</dbReference>
<dbReference type="Gene3D" id="3.90.20.20">
    <property type="match status" value="1"/>
</dbReference>
<dbReference type="Gene3D" id="2.30.22.10">
    <property type="entry name" value="Head domain of nucleotide exchange factor GrpE"/>
    <property type="match status" value="1"/>
</dbReference>
<dbReference type="HAMAP" id="MF_01151">
    <property type="entry name" value="GrpE"/>
    <property type="match status" value="1"/>
</dbReference>
<dbReference type="InterPro" id="IPR000740">
    <property type="entry name" value="GrpE"/>
</dbReference>
<dbReference type="InterPro" id="IPR013805">
    <property type="entry name" value="GrpE_coiled_coil"/>
</dbReference>
<dbReference type="InterPro" id="IPR009012">
    <property type="entry name" value="GrpE_head"/>
</dbReference>
<dbReference type="NCBIfam" id="NF010739">
    <property type="entry name" value="PRK14141.1"/>
    <property type="match status" value="1"/>
</dbReference>
<dbReference type="PANTHER" id="PTHR21237">
    <property type="entry name" value="GRPE PROTEIN"/>
    <property type="match status" value="1"/>
</dbReference>
<dbReference type="PANTHER" id="PTHR21237:SF23">
    <property type="entry name" value="GRPE PROTEIN HOMOLOG, MITOCHONDRIAL"/>
    <property type="match status" value="1"/>
</dbReference>
<dbReference type="Pfam" id="PF01025">
    <property type="entry name" value="GrpE"/>
    <property type="match status" value="1"/>
</dbReference>
<dbReference type="PRINTS" id="PR00773">
    <property type="entry name" value="GRPEPROTEIN"/>
</dbReference>
<dbReference type="SUPFAM" id="SSF58014">
    <property type="entry name" value="Coiled-coil domain of nucleotide exchange factor GrpE"/>
    <property type="match status" value="1"/>
</dbReference>
<dbReference type="SUPFAM" id="SSF51064">
    <property type="entry name" value="Head domain of nucleotide exchange factor GrpE"/>
    <property type="match status" value="1"/>
</dbReference>
<dbReference type="PROSITE" id="PS01071">
    <property type="entry name" value="GRPE"/>
    <property type="match status" value="1"/>
</dbReference>
<keyword id="KW-0143">Chaperone</keyword>
<keyword id="KW-0963">Cytoplasm</keyword>
<keyword id="KW-0346">Stress response</keyword>
<evidence type="ECO:0000255" key="1">
    <source>
        <dbReference type="HAMAP-Rule" id="MF_01151"/>
    </source>
</evidence>
<evidence type="ECO:0000256" key="2">
    <source>
        <dbReference type="SAM" id="MobiDB-lite"/>
    </source>
</evidence>
<gene>
    <name evidence="1" type="primary">grpE</name>
    <name type="ordered locus">Rpal_0334</name>
</gene>
<organism>
    <name type="scientific">Rhodopseudomonas palustris (strain TIE-1)</name>
    <dbReference type="NCBI Taxonomy" id="395960"/>
    <lineage>
        <taxon>Bacteria</taxon>
        <taxon>Pseudomonadati</taxon>
        <taxon>Pseudomonadota</taxon>
        <taxon>Alphaproteobacteria</taxon>
        <taxon>Hyphomicrobiales</taxon>
        <taxon>Nitrobacteraceae</taxon>
        <taxon>Rhodopseudomonas</taxon>
    </lineage>
</organism>
<proteinExistence type="inferred from homology"/>
<accession>B3Q970</accession>
<feature type="chain" id="PRO_1000137604" description="Protein GrpE">
    <location>
        <begin position="1"/>
        <end position="207"/>
    </location>
</feature>
<feature type="region of interest" description="Disordered" evidence="2">
    <location>
        <begin position="1"/>
        <end position="39"/>
    </location>
</feature>
<feature type="compositionally biased region" description="Basic and acidic residues" evidence="2">
    <location>
        <begin position="1"/>
        <end position="11"/>
    </location>
</feature>